<dbReference type="EC" id="6.1.1.19" evidence="1"/>
<dbReference type="EMBL" id="CP000492">
    <property type="protein sequence ID" value="ABL66686.1"/>
    <property type="molecule type" value="Genomic_DNA"/>
</dbReference>
<dbReference type="RefSeq" id="WP_015961213.1">
    <property type="nucleotide sequence ID" value="NC_008639.1"/>
</dbReference>
<dbReference type="SMR" id="A1BJV9"/>
<dbReference type="STRING" id="290317.Cpha266_2702"/>
<dbReference type="KEGG" id="cph:Cpha266_2702"/>
<dbReference type="eggNOG" id="COG0018">
    <property type="taxonomic scope" value="Bacteria"/>
</dbReference>
<dbReference type="HOGENOM" id="CLU_006406_0_1_10"/>
<dbReference type="OrthoDB" id="9805987at2"/>
<dbReference type="Proteomes" id="UP000008701">
    <property type="component" value="Chromosome"/>
</dbReference>
<dbReference type="GO" id="GO:0005737">
    <property type="term" value="C:cytoplasm"/>
    <property type="evidence" value="ECO:0007669"/>
    <property type="project" value="UniProtKB-SubCell"/>
</dbReference>
<dbReference type="GO" id="GO:0004814">
    <property type="term" value="F:arginine-tRNA ligase activity"/>
    <property type="evidence" value="ECO:0007669"/>
    <property type="project" value="UniProtKB-UniRule"/>
</dbReference>
<dbReference type="GO" id="GO:0005524">
    <property type="term" value="F:ATP binding"/>
    <property type="evidence" value="ECO:0007669"/>
    <property type="project" value="UniProtKB-UniRule"/>
</dbReference>
<dbReference type="GO" id="GO:0006420">
    <property type="term" value="P:arginyl-tRNA aminoacylation"/>
    <property type="evidence" value="ECO:0007669"/>
    <property type="project" value="UniProtKB-UniRule"/>
</dbReference>
<dbReference type="CDD" id="cd00671">
    <property type="entry name" value="ArgRS_core"/>
    <property type="match status" value="1"/>
</dbReference>
<dbReference type="FunFam" id="1.10.730.10:FF:000008">
    <property type="entry name" value="Arginine--tRNA ligase"/>
    <property type="match status" value="1"/>
</dbReference>
<dbReference type="Gene3D" id="3.30.1360.70">
    <property type="entry name" value="Arginyl tRNA synthetase N-terminal domain"/>
    <property type="match status" value="1"/>
</dbReference>
<dbReference type="Gene3D" id="3.40.50.620">
    <property type="entry name" value="HUPs"/>
    <property type="match status" value="1"/>
</dbReference>
<dbReference type="Gene3D" id="1.10.730.10">
    <property type="entry name" value="Isoleucyl-tRNA Synthetase, Domain 1"/>
    <property type="match status" value="1"/>
</dbReference>
<dbReference type="HAMAP" id="MF_00123">
    <property type="entry name" value="Arg_tRNA_synth"/>
    <property type="match status" value="1"/>
</dbReference>
<dbReference type="InterPro" id="IPR001278">
    <property type="entry name" value="Arg-tRNA-ligase"/>
</dbReference>
<dbReference type="InterPro" id="IPR005148">
    <property type="entry name" value="Arg-tRNA-synth_N"/>
</dbReference>
<dbReference type="InterPro" id="IPR036695">
    <property type="entry name" value="Arg-tRNA-synth_N_sf"/>
</dbReference>
<dbReference type="InterPro" id="IPR035684">
    <property type="entry name" value="ArgRS_core"/>
</dbReference>
<dbReference type="InterPro" id="IPR008909">
    <property type="entry name" value="DALR_anticod-bd"/>
</dbReference>
<dbReference type="InterPro" id="IPR014729">
    <property type="entry name" value="Rossmann-like_a/b/a_fold"/>
</dbReference>
<dbReference type="InterPro" id="IPR009080">
    <property type="entry name" value="tRNAsynth_Ia_anticodon-bd"/>
</dbReference>
<dbReference type="NCBIfam" id="TIGR00456">
    <property type="entry name" value="argS"/>
    <property type="match status" value="1"/>
</dbReference>
<dbReference type="PANTHER" id="PTHR11956:SF5">
    <property type="entry name" value="ARGININE--TRNA LIGASE, CYTOPLASMIC"/>
    <property type="match status" value="1"/>
</dbReference>
<dbReference type="PANTHER" id="PTHR11956">
    <property type="entry name" value="ARGINYL-TRNA SYNTHETASE"/>
    <property type="match status" value="1"/>
</dbReference>
<dbReference type="Pfam" id="PF03485">
    <property type="entry name" value="Arg_tRNA_synt_N"/>
    <property type="match status" value="1"/>
</dbReference>
<dbReference type="Pfam" id="PF05746">
    <property type="entry name" value="DALR_1"/>
    <property type="match status" value="1"/>
</dbReference>
<dbReference type="Pfam" id="PF00750">
    <property type="entry name" value="tRNA-synt_1d"/>
    <property type="match status" value="1"/>
</dbReference>
<dbReference type="PRINTS" id="PR01038">
    <property type="entry name" value="TRNASYNTHARG"/>
</dbReference>
<dbReference type="SMART" id="SM01016">
    <property type="entry name" value="Arg_tRNA_synt_N"/>
    <property type="match status" value="1"/>
</dbReference>
<dbReference type="SMART" id="SM00836">
    <property type="entry name" value="DALR_1"/>
    <property type="match status" value="1"/>
</dbReference>
<dbReference type="SUPFAM" id="SSF47323">
    <property type="entry name" value="Anticodon-binding domain of a subclass of class I aminoacyl-tRNA synthetases"/>
    <property type="match status" value="1"/>
</dbReference>
<dbReference type="SUPFAM" id="SSF55190">
    <property type="entry name" value="Arginyl-tRNA synthetase (ArgRS), N-terminal 'additional' domain"/>
    <property type="match status" value="1"/>
</dbReference>
<dbReference type="SUPFAM" id="SSF52374">
    <property type="entry name" value="Nucleotidylyl transferase"/>
    <property type="match status" value="1"/>
</dbReference>
<accession>A1BJV9</accession>
<sequence>MHDFFLPVIKNALLSLAVSSDKPVLIERPADKKFGDFSTNIAFLIAKESRRNPKEFAGELIAHLSFPPDTIKSMTVAGPGFINFFLTPTFIMQSVEQILLEGKGYGRSCLGKGKKAIVEYVSANPTGPLTIGRGRGGVLGDCIANLLETQSYAVTREYYFNDAGRQMQILGESVRFRYLELCGVAETFPETHYQGAYIREIAESLFAGHGAALQGVHDLLPFIKSAETIIFKSIKNTLERIGIRHDSFFNEHTLYHREGSGQSANEEVIDLLREKQFIGEYDGATWFLTSRIGQEKDKVLIKSSGEPSYRLPDIAYHITKFKRGYDLMVNVFGADHIDEYPDVLEALKILGYDASRIQVAINQFVTTTVDGQSVKMSTRKGNADLLDDLVDDVGPDATRLFFIMRSKDSHLNFDIDLAKKQSKDNPVFYLHYAHARICSLLRMAALENGFDPDGSGHHLLQLLDSEPELRLGLLLLEYPQMITASIRLLEPQKMVDYLHSVAELYHKFYQECPILKAEPDISKARLFLSLATKQVLCNGFRILGISAPESM</sequence>
<protein>
    <recommendedName>
        <fullName evidence="1">Arginine--tRNA ligase</fullName>
        <ecNumber evidence="1">6.1.1.19</ecNumber>
    </recommendedName>
    <alternativeName>
        <fullName evidence="1">Arginyl-tRNA synthetase</fullName>
        <shortName evidence="1">ArgRS</shortName>
    </alternativeName>
</protein>
<proteinExistence type="inferred from homology"/>
<evidence type="ECO:0000255" key="1">
    <source>
        <dbReference type="HAMAP-Rule" id="MF_00123"/>
    </source>
</evidence>
<feature type="chain" id="PRO_1000018012" description="Arginine--tRNA ligase">
    <location>
        <begin position="1"/>
        <end position="551"/>
    </location>
</feature>
<feature type="short sequence motif" description="'HIGH' region">
    <location>
        <begin position="123"/>
        <end position="133"/>
    </location>
</feature>
<keyword id="KW-0030">Aminoacyl-tRNA synthetase</keyword>
<keyword id="KW-0067">ATP-binding</keyword>
<keyword id="KW-0963">Cytoplasm</keyword>
<keyword id="KW-0436">Ligase</keyword>
<keyword id="KW-0547">Nucleotide-binding</keyword>
<keyword id="KW-0648">Protein biosynthesis</keyword>
<keyword id="KW-1185">Reference proteome</keyword>
<reference key="1">
    <citation type="submission" date="2006-12" db="EMBL/GenBank/DDBJ databases">
        <title>Complete sequence of Chlorobium phaeobacteroides DSM 266.</title>
        <authorList>
            <consortium name="US DOE Joint Genome Institute"/>
            <person name="Copeland A."/>
            <person name="Lucas S."/>
            <person name="Lapidus A."/>
            <person name="Barry K."/>
            <person name="Detter J.C."/>
            <person name="Glavina del Rio T."/>
            <person name="Hammon N."/>
            <person name="Israni S."/>
            <person name="Pitluck S."/>
            <person name="Goltsman E."/>
            <person name="Schmutz J."/>
            <person name="Larimer F."/>
            <person name="Land M."/>
            <person name="Hauser L."/>
            <person name="Mikhailova N."/>
            <person name="Li T."/>
            <person name="Overmann J."/>
            <person name="Bryant D.A."/>
            <person name="Richardson P."/>
        </authorList>
    </citation>
    <scope>NUCLEOTIDE SEQUENCE [LARGE SCALE GENOMIC DNA]</scope>
    <source>
        <strain>DSM 266 / SMG 266 / 2430</strain>
    </source>
</reference>
<name>SYR_CHLPD</name>
<comment type="catalytic activity">
    <reaction evidence="1">
        <text>tRNA(Arg) + L-arginine + ATP = L-arginyl-tRNA(Arg) + AMP + diphosphate</text>
        <dbReference type="Rhea" id="RHEA:20301"/>
        <dbReference type="Rhea" id="RHEA-COMP:9658"/>
        <dbReference type="Rhea" id="RHEA-COMP:9673"/>
        <dbReference type="ChEBI" id="CHEBI:30616"/>
        <dbReference type="ChEBI" id="CHEBI:32682"/>
        <dbReference type="ChEBI" id="CHEBI:33019"/>
        <dbReference type="ChEBI" id="CHEBI:78442"/>
        <dbReference type="ChEBI" id="CHEBI:78513"/>
        <dbReference type="ChEBI" id="CHEBI:456215"/>
        <dbReference type="EC" id="6.1.1.19"/>
    </reaction>
</comment>
<comment type="subunit">
    <text evidence="1">Monomer.</text>
</comment>
<comment type="subcellular location">
    <subcellularLocation>
        <location evidence="1">Cytoplasm</location>
    </subcellularLocation>
</comment>
<comment type="similarity">
    <text evidence="1">Belongs to the class-I aminoacyl-tRNA synthetase family.</text>
</comment>
<organism>
    <name type="scientific">Chlorobium phaeobacteroides (strain DSM 266 / SMG 266 / 2430)</name>
    <dbReference type="NCBI Taxonomy" id="290317"/>
    <lineage>
        <taxon>Bacteria</taxon>
        <taxon>Pseudomonadati</taxon>
        <taxon>Chlorobiota</taxon>
        <taxon>Chlorobiia</taxon>
        <taxon>Chlorobiales</taxon>
        <taxon>Chlorobiaceae</taxon>
        <taxon>Chlorobium/Pelodictyon group</taxon>
        <taxon>Chlorobium</taxon>
    </lineage>
</organism>
<gene>
    <name evidence="1" type="primary">argS</name>
    <name type="ordered locus">Cpha266_2702</name>
</gene>